<feature type="chain" id="PRO_1000114172" description="Porphobilinogen deaminase">
    <location>
        <begin position="1"/>
        <end position="313"/>
    </location>
</feature>
<feature type="modified residue" description="S-(dipyrrolylmethanemethyl)cysteine" evidence="1">
    <location>
        <position position="242"/>
    </location>
</feature>
<evidence type="ECO:0000255" key="1">
    <source>
        <dbReference type="HAMAP-Rule" id="MF_00260"/>
    </source>
</evidence>
<proteinExistence type="inferred from homology"/>
<organism>
    <name type="scientific">Proteus mirabilis (strain HI4320)</name>
    <dbReference type="NCBI Taxonomy" id="529507"/>
    <lineage>
        <taxon>Bacteria</taxon>
        <taxon>Pseudomonadati</taxon>
        <taxon>Pseudomonadota</taxon>
        <taxon>Gammaproteobacteria</taxon>
        <taxon>Enterobacterales</taxon>
        <taxon>Morganellaceae</taxon>
        <taxon>Proteus</taxon>
    </lineage>
</organism>
<accession>B4F1X3</accession>
<name>HEM3_PROMH</name>
<dbReference type="EC" id="2.5.1.61" evidence="1"/>
<dbReference type="EMBL" id="AM942759">
    <property type="protein sequence ID" value="CAR46538.1"/>
    <property type="molecule type" value="Genomic_DNA"/>
</dbReference>
<dbReference type="RefSeq" id="WP_012368705.1">
    <property type="nucleotide sequence ID" value="NC_010554.1"/>
</dbReference>
<dbReference type="SMR" id="B4F1X3"/>
<dbReference type="EnsemblBacteria" id="CAR46538">
    <property type="protein sequence ID" value="CAR46538"/>
    <property type="gene ID" value="PMI3332"/>
</dbReference>
<dbReference type="GeneID" id="6801447"/>
<dbReference type="KEGG" id="pmr:PMI3332"/>
<dbReference type="PATRIC" id="fig|529507.6.peg.3259"/>
<dbReference type="eggNOG" id="COG0181">
    <property type="taxonomic scope" value="Bacteria"/>
</dbReference>
<dbReference type="HOGENOM" id="CLU_019704_0_2_6"/>
<dbReference type="UniPathway" id="UPA00251">
    <property type="reaction ID" value="UER00319"/>
</dbReference>
<dbReference type="Proteomes" id="UP000008319">
    <property type="component" value="Chromosome"/>
</dbReference>
<dbReference type="GO" id="GO:0005737">
    <property type="term" value="C:cytoplasm"/>
    <property type="evidence" value="ECO:0007669"/>
    <property type="project" value="TreeGrafter"/>
</dbReference>
<dbReference type="GO" id="GO:0004418">
    <property type="term" value="F:hydroxymethylbilane synthase activity"/>
    <property type="evidence" value="ECO:0007669"/>
    <property type="project" value="UniProtKB-UniRule"/>
</dbReference>
<dbReference type="GO" id="GO:0006782">
    <property type="term" value="P:protoporphyrinogen IX biosynthetic process"/>
    <property type="evidence" value="ECO:0007669"/>
    <property type="project" value="UniProtKB-UniRule"/>
</dbReference>
<dbReference type="CDD" id="cd13646">
    <property type="entry name" value="PBP2_EcHMBS_like"/>
    <property type="match status" value="1"/>
</dbReference>
<dbReference type="FunFam" id="3.30.160.40:FF:000002">
    <property type="entry name" value="Porphobilinogen deaminase"/>
    <property type="match status" value="1"/>
</dbReference>
<dbReference type="FunFam" id="3.40.190.10:FF:000004">
    <property type="entry name" value="Porphobilinogen deaminase"/>
    <property type="match status" value="1"/>
</dbReference>
<dbReference type="FunFam" id="3.40.190.10:FF:000005">
    <property type="entry name" value="Porphobilinogen deaminase"/>
    <property type="match status" value="1"/>
</dbReference>
<dbReference type="Gene3D" id="3.40.190.10">
    <property type="entry name" value="Periplasmic binding protein-like II"/>
    <property type="match status" value="2"/>
</dbReference>
<dbReference type="Gene3D" id="3.30.160.40">
    <property type="entry name" value="Porphobilinogen deaminase, C-terminal domain"/>
    <property type="match status" value="1"/>
</dbReference>
<dbReference type="HAMAP" id="MF_00260">
    <property type="entry name" value="Porphobil_deam"/>
    <property type="match status" value="1"/>
</dbReference>
<dbReference type="InterPro" id="IPR000860">
    <property type="entry name" value="HemC"/>
</dbReference>
<dbReference type="InterPro" id="IPR022419">
    <property type="entry name" value="Porphobilin_deaminase_cofac_BS"/>
</dbReference>
<dbReference type="InterPro" id="IPR022417">
    <property type="entry name" value="Porphobilin_deaminase_N"/>
</dbReference>
<dbReference type="InterPro" id="IPR022418">
    <property type="entry name" value="Porphobilinogen_deaminase_C"/>
</dbReference>
<dbReference type="InterPro" id="IPR036803">
    <property type="entry name" value="Porphobilinogen_deaminase_C_sf"/>
</dbReference>
<dbReference type="NCBIfam" id="TIGR00212">
    <property type="entry name" value="hemC"/>
    <property type="match status" value="1"/>
</dbReference>
<dbReference type="PANTHER" id="PTHR11557">
    <property type="entry name" value="PORPHOBILINOGEN DEAMINASE"/>
    <property type="match status" value="1"/>
</dbReference>
<dbReference type="PANTHER" id="PTHR11557:SF0">
    <property type="entry name" value="PORPHOBILINOGEN DEAMINASE"/>
    <property type="match status" value="1"/>
</dbReference>
<dbReference type="Pfam" id="PF01379">
    <property type="entry name" value="Porphobil_deam"/>
    <property type="match status" value="1"/>
</dbReference>
<dbReference type="Pfam" id="PF03900">
    <property type="entry name" value="Porphobil_deamC"/>
    <property type="match status" value="1"/>
</dbReference>
<dbReference type="PIRSF" id="PIRSF001438">
    <property type="entry name" value="4pyrrol_synth_OHMeBilane_synth"/>
    <property type="match status" value="1"/>
</dbReference>
<dbReference type="PRINTS" id="PR00151">
    <property type="entry name" value="PORPHBDMNASE"/>
</dbReference>
<dbReference type="SUPFAM" id="SSF53850">
    <property type="entry name" value="Periplasmic binding protein-like II"/>
    <property type="match status" value="1"/>
</dbReference>
<dbReference type="SUPFAM" id="SSF54782">
    <property type="entry name" value="Porphobilinogen deaminase (hydroxymethylbilane synthase), C-terminal domain"/>
    <property type="match status" value="1"/>
</dbReference>
<dbReference type="PROSITE" id="PS00533">
    <property type="entry name" value="PORPHOBILINOGEN_DEAM"/>
    <property type="match status" value="1"/>
</dbReference>
<protein>
    <recommendedName>
        <fullName evidence="1">Porphobilinogen deaminase</fullName>
        <shortName evidence="1">PBG</shortName>
        <ecNumber evidence="1">2.5.1.61</ecNumber>
    </recommendedName>
    <alternativeName>
        <fullName evidence="1">Hydroxymethylbilane synthase</fullName>
        <shortName evidence="1">HMBS</shortName>
    </alternativeName>
    <alternativeName>
        <fullName evidence="1">Pre-uroporphyrinogen synthase</fullName>
    </alternativeName>
</protein>
<sequence>MSKSTIRIATRQSPLAMWQALYVKEQLQIAHPSLVVELVPMVTKGDIILDTPLAKVGGKGLFVKELELALLSSRADIAVHSMKDVPIDFPEGLGLVTICEREDPRDAFVSNHYDSLEQLPAGSVVGTSSLRRQCQLKALRPDLIIRDLRGNVGTRLSKLDNGDYDAIILAVAGLKRLKLTERIRSSLSAEQSLPAVGQGAVGIECRLDDHDTQALLAALNHADTATCVKAERAMNTRLEGGCQVPIGSYAIWQNGKIWLRALVGSPDGETILRGERLVSPEDAEQAGISLAEELLDKGAREILTAVYQGNTAI</sequence>
<reference key="1">
    <citation type="journal article" date="2008" name="J. Bacteriol.">
        <title>Complete genome sequence of uropathogenic Proteus mirabilis, a master of both adherence and motility.</title>
        <authorList>
            <person name="Pearson M.M."/>
            <person name="Sebaihia M."/>
            <person name="Churcher C."/>
            <person name="Quail M.A."/>
            <person name="Seshasayee A.S."/>
            <person name="Luscombe N.M."/>
            <person name="Abdellah Z."/>
            <person name="Arrosmith C."/>
            <person name="Atkin B."/>
            <person name="Chillingworth T."/>
            <person name="Hauser H."/>
            <person name="Jagels K."/>
            <person name="Moule S."/>
            <person name="Mungall K."/>
            <person name="Norbertczak H."/>
            <person name="Rabbinowitsch E."/>
            <person name="Walker D."/>
            <person name="Whithead S."/>
            <person name="Thomson N.R."/>
            <person name="Rather P.N."/>
            <person name="Parkhill J."/>
            <person name="Mobley H.L.T."/>
        </authorList>
    </citation>
    <scope>NUCLEOTIDE SEQUENCE [LARGE SCALE GENOMIC DNA]</scope>
    <source>
        <strain>HI4320</strain>
    </source>
</reference>
<gene>
    <name evidence="1" type="primary">hemC</name>
    <name type="ordered locus">PMI3332</name>
</gene>
<keyword id="KW-0627">Porphyrin biosynthesis</keyword>
<keyword id="KW-1185">Reference proteome</keyword>
<keyword id="KW-0808">Transferase</keyword>
<comment type="function">
    <text evidence="1">Tetrapolymerization of the monopyrrole PBG into the hydroxymethylbilane pre-uroporphyrinogen in several discrete steps.</text>
</comment>
<comment type="catalytic activity">
    <reaction evidence="1">
        <text>4 porphobilinogen + H2O = hydroxymethylbilane + 4 NH4(+)</text>
        <dbReference type="Rhea" id="RHEA:13185"/>
        <dbReference type="ChEBI" id="CHEBI:15377"/>
        <dbReference type="ChEBI" id="CHEBI:28938"/>
        <dbReference type="ChEBI" id="CHEBI:57845"/>
        <dbReference type="ChEBI" id="CHEBI:58126"/>
        <dbReference type="EC" id="2.5.1.61"/>
    </reaction>
</comment>
<comment type="cofactor">
    <cofactor evidence="1">
        <name>dipyrromethane</name>
        <dbReference type="ChEBI" id="CHEBI:60342"/>
    </cofactor>
    <text evidence="1">Binds 1 dipyrromethane group covalently.</text>
</comment>
<comment type="pathway">
    <text evidence="1">Porphyrin-containing compound metabolism; protoporphyrin-IX biosynthesis; coproporphyrinogen-III from 5-aminolevulinate: step 2/4.</text>
</comment>
<comment type="subunit">
    <text evidence="1">Monomer.</text>
</comment>
<comment type="miscellaneous">
    <text evidence="1">The porphobilinogen subunits are added to the dipyrromethane group.</text>
</comment>
<comment type="similarity">
    <text evidence="1">Belongs to the HMBS family.</text>
</comment>